<proteinExistence type="predicted"/>
<comment type="similarity">
    <text evidence="1">To E.coli YnjA.</text>
</comment>
<evidence type="ECO:0000305" key="1"/>
<gene>
    <name type="ordered locus">MT2376</name>
</gene>
<accession>P9WLB6</accession>
<accession>L0T9G4</accession>
<accession>P64993</accession>
<accession>P71899</accession>
<keyword id="KW-1185">Reference proteome</keyword>
<organism>
    <name type="scientific">Mycobacterium tuberculosis (strain CDC 1551 / Oshkosh)</name>
    <dbReference type="NCBI Taxonomy" id="83331"/>
    <lineage>
        <taxon>Bacteria</taxon>
        <taxon>Bacillati</taxon>
        <taxon>Actinomycetota</taxon>
        <taxon>Actinomycetes</taxon>
        <taxon>Mycobacteriales</taxon>
        <taxon>Mycobacteriaceae</taxon>
        <taxon>Mycobacterium</taxon>
        <taxon>Mycobacterium tuberculosis complex</taxon>
    </lineage>
</organism>
<dbReference type="EMBL" id="AE000516">
    <property type="protein sequence ID" value="AAK46669.1"/>
    <property type="molecule type" value="Genomic_DNA"/>
</dbReference>
<dbReference type="PIR" id="B70703">
    <property type="entry name" value="B70703"/>
</dbReference>
<dbReference type="RefSeq" id="WP_003411924.1">
    <property type="nucleotide sequence ID" value="NZ_KK341227.1"/>
</dbReference>
<dbReference type="SMR" id="P9WLB6"/>
<dbReference type="KEGG" id="mtc:MT2376"/>
<dbReference type="PATRIC" id="fig|83331.31.peg.2560"/>
<dbReference type="HOGENOM" id="CLU_979422_0_0_11"/>
<dbReference type="Proteomes" id="UP000001020">
    <property type="component" value="Chromosome"/>
</dbReference>
<dbReference type="Gene3D" id="1.20.1290.10">
    <property type="entry name" value="AhpD-like"/>
    <property type="match status" value="1"/>
</dbReference>
<dbReference type="InterPro" id="IPR029032">
    <property type="entry name" value="AhpD-like"/>
</dbReference>
<dbReference type="SUPFAM" id="SSF69118">
    <property type="entry name" value="AhpD-like"/>
    <property type="match status" value="1"/>
</dbReference>
<protein>
    <recommendedName>
        <fullName>Uncharacterized protein MT2376</fullName>
    </recommendedName>
</protein>
<sequence>MPAPVSVRDDLCRLVALSPGDGRIAGLVRQVCARALSLPSLPCEVAVNEPESPAEAVVAEFAEQFSVDVSAITGEQRSLLWTHLGEDAFGAVVAMYIADFVPRVRAGLEALGVGKEYLGWVTGPISWDHNTDLSAAVFNGFLPAVARMRALDPVTSELVRLRGAAQHNCRVCKSLREVSALDAGGSETLYGEIERFDTSVLLDVRAKAALRYADALIWTPAHLAVDVAVEVRSRFSDDEAVELTFDIMRNASNKVAVSLGADAPRVQQGTERYRIGLDGQTVFG</sequence>
<reference key="1">
    <citation type="journal article" date="2002" name="J. Bacteriol.">
        <title>Whole-genome comparison of Mycobacterium tuberculosis clinical and laboratory strains.</title>
        <authorList>
            <person name="Fleischmann R.D."/>
            <person name="Alland D."/>
            <person name="Eisen J.A."/>
            <person name="Carpenter L."/>
            <person name="White O."/>
            <person name="Peterson J.D."/>
            <person name="DeBoy R.T."/>
            <person name="Dodson R.J."/>
            <person name="Gwinn M.L."/>
            <person name="Haft D.H."/>
            <person name="Hickey E.K."/>
            <person name="Kolonay J.F."/>
            <person name="Nelson W.C."/>
            <person name="Umayam L.A."/>
            <person name="Ermolaeva M.D."/>
            <person name="Salzberg S.L."/>
            <person name="Delcher A."/>
            <person name="Utterback T.R."/>
            <person name="Weidman J.F."/>
            <person name="Khouri H.M."/>
            <person name="Gill J."/>
            <person name="Mikula A."/>
            <person name="Bishai W."/>
            <person name="Jacobs W.R. Jr."/>
            <person name="Venter J.C."/>
            <person name="Fraser C.M."/>
        </authorList>
    </citation>
    <scope>NUCLEOTIDE SEQUENCE [LARGE SCALE GENOMIC DNA]</scope>
    <source>
        <strain>CDC 1551 / Oshkosh</strain>
    </source>
</reference>
<feature type="chain" id="PRO_0000427507" description="Uncharacterized protein MT2376">
    <location>
        <begin position="1"/>
        <end position="284"/>
    </location>
</feature>
<name>Y2313_MYCTO</name>